<comment type="function">
    <text evidence="1">Negatively regulates transcription of bacterial ribonucleotide reductase nrd genes and operons by binding to NrdR-boxes.</text>
</comment>
<comment type="cofactor">
    <cofactor evidence="1">
        <name>Zn(2+)</name>
        <dbReference type="ChEBI" id="CHEBI:29105"/>
    </cofactor>
    <text evidence="1">Binds 1 zinc ion.</text>
</comment>
<comment type="similarity">
    <text evidence="1">Belongs to the NrdR family.</text>
</comment>
<evidence type="ECO:0000255" key="1">
    <source>
        <dbReference type="HAMAP-Rule" id="MF_00440"/>
    </source>
</evidence>
<reference key="1">
    <citation type="journal article" date="2002" name="Proc. Natl. Acad. Sci. U.S.A.">
        <title>Genome sequence of Streptococcus mutans UA159, a cariogenic dental pathogen.</title>
        <authorList>
            <person name="Ajdic D.J."/>
            <person name="McShan W.M."/>
            <person name="McLaughlin R.E."/>
            <person name="Savic G."/>
            <person name="Chang J."/>
            <person name="Carson M.B."/>
            <person name="Primeaux C."/>
            <person name="Tian R."/>
            <person name="Kenton S."/>
            <person name="Jia H.G."/>
            <person name="Lin S.P."/>
            <person name="Qian Y."/>
            <person name="Li S."/>
            <person name="Zhu H."/>
            <person name="Najar F.Z."/>
            <person name="Lai H."/>
            <person name="White J."/>
            <person name="Roe B.A."/>
            <person name="Ferretti J.J."/>
        </authorList>
    </citation>
    <scope>NUCLEOTIDE SEQUENCE [LARGE SCALE GENOMIC DNA]</scope>
    <source>
        <strain>ATCC 700610 / UA159</strain>
    </source>
</reference>
<dbReference type="EMBL" id="AE014133">
    <property type="protein sequence ID" value="AAN59534.1"/>
    <property type="molecule type" value="Genomic_DNA"/>
</dbReference>
<dbReference type="RefSeq" id="NP_722228.1">
    <property type="nucleotide sequence ID" value="NC_004350.2"/>
</dbReference>
<dbReference type="RefSeq" id="WP_002262120.1">
    <property type="nucleotide sequence ID" value="NC_004350.2"/>
</dbReference>
<dbReference type="SMR" id="Q8DS88"/>
<dbReference type="STRING" id="210007.SMU_1923c"/>
<dbReference type="GeneID" id="93858687"/>
<dbReference type="KEGG" id="smu:SMU_1923c"/>
<dbReference type="PATRIC" id="fig|210007.7.peg.1709"/>
<dbReference type="eggNOG" id="COG1327">
    <property type="taxonomic scope" value="Bacteria"/>
</dbReference>
<dbReference type="HOGENOM" id="CLU_108412_0_0_9"/>
<dbReference type="OrthoDB" id="9807461at2"/>
<dbReference type="PhylomeDB" id="Q8DS88"/>
<dbReference type="Proteomes" id="UP000002512">
    <property type="component" value="Chromosome"/>
</dbReference>
<dbReference type="GO" id="GO:0005524">
    <property type="term" value="F:ATP binding"/>
    <property type="evidence" value="ECO:0007669"/>
    <property type="project" value="UniProtKB-KW"/>
</dbReference>
<dbReference type="GO" id="GO:0003677">
    <property type="term" value="F:DNA binding"/>
    <property type="evidence" value="ECO:0007669"/>
    <property type="project" value="UniProtKB-KW"/>
</dbReference>
<dbReference type="GO" id="GO:0008270">
    <property type="term" value="F:zinc ion binding"/>
    <property type="evidence" value="ECO:0007669"/>
    <property type="project" value="UniProtKB-UniRule"/>
</dbReference>
<dbReference type="GO" id="GO:0045892">
    <property type="term" value="P:negative regulation of DNA-templated transcription"/>
    <property type="evidence" value="ECO:0007669"/>
    <property type="project" value="UniProtKB-UniRule"/>
</dbReference>
<dbReference type="HAMAP" id="MF_00440">
    <property type="entry name" value="NrdR"/>
    <property type="match status" value="1"/>
</dbReference>
<dbReference type="InterPro" id="IPR005144">
    <property type="entry name" value="ATP-cone_dom"/>
</dbReference>
<dbReference type="InterPro" id="IPR055173">
    <property type="entry name" value="NrdR-like_N"/>
</dbReference>
<dbReference type="InterPro" id="IPR003796">
    <property type="entry name" value="RNR_NrdR-like"/>
</dbReference>
<dbReference type="NCBIfam" id="TIGR00244">
    <property type="entry name" value="transcriptional regulator NrdR"/>
    <property type="match status" value="1"/>
</dbReference>
<dbReference type="PANTHER" id="PTHR30455">
    <property type="entry name" value="TRANSCRIPTIONAL REPRESSOR NRDR"/>
    <property type="match status" value="1"/>
</dbReference>
<dbReference type="PANTHER" id="PTHR30455:SF2">
    <property type="entry name" value="TRANSCRIPTIONAL REPRESSOR NRDR"/>
    <property type="match status" value="1"/>
</dbReference>
<dbReference type="Pfam" id="PF03477">
    <property type="entry name" value="ATP-cone"/>
    <property type="match status" value="1"/>
</dbReference>
<dbReference type="Pfam" id="PF22811">
    <property type="entry name" value="Zn_ribbon_NrdR"/>
    <property type="match status" value="1"/>
</dbReference>
<dbReference type="PROSITE" id="PS51161">
    <property type="entry name" value="ATP_CONE"/>
    <property type="match status" value="1"/>
</dbReference>
<protein>
    <recommendedName>
        <fullName evidence="1">Transcriptional repressor NrdR</fullName>
    </recommendedName>
</protein>
<proteinExistence type="inferred from homology"/>
<name>NRDR_STRMU</name>
<organism>
    <name type="scientific">Streptococcus mutans serotype c (strain ATCC 700610 / UA159)</name>
    <dbReference type="NCBI Taxonomy" id="210007"/>
    <lineage>
        <taxon>Bacteria</taxon>
        <taxon>Bacillati</taxon>
        <taxon>Bacillota</taxon>
        <taxon>Bacilli</taxon>
        <taxon>Lactobacillales</taxon>
        <taxon>Streptococcaceae</taxon>
        <taxon>Streptococcus</taxon>
    </lineage>
</organism>
<gene>
    <name evidence="1" type="primary">nrdR</name>
    <name type="ordered locus">SMU_1923c</name>
</gene>
<feature type="chain" id="PRO_0000182356" description="Transcriptional repressor NrdR">
    <location>
        <begin position="1"/>
        <end position="163"/>
    </location>
</feature>
<feature type="domain" description="ATP-cone" evidence="1">
    <location>
        <begin position="49"/>
        <end position="139"/>
    </location>
</feature>
<feature type="zinc finger region" evidence="1">
    <location>
        <begin position="3"/>
        <end position="34"/>
    </location>
</feature>
<sequence length="163" mass="18982">MRCPKCNYLKSSVVDSRQAEEGNTIRRRRECENCHTRFTTFERIEELPLLVVKKDGTREQFSRDKIFNGIIRSAQKRPVSSSAIEKVVNDIEQKIRSDYDSEVSSVVIGNLVMDELAELDEITYVRFASVYRSFKDVDEIEALLQQITNRVRSKKKRKADETN</sequence>
<keyword id="KW-0067">ATP-binding</keyword>
<keyword id="KW-0238">DNA-binding</keyword>
<keyword id="KW-0479">Metal-binding</keyword>
<keyword id="KW-0547">Nucleotide-binding</keyword>
<keyword id="KW-1185">Reference proteome</keyword>
<keyword id="KW-0678">Repressor</keyword>
<keyword id="KW-0804">Transcription</keyword>
<keyword id="KW-0805">Transcription regulation</keyword>
<keyword id="KW-0862">Zinc</keyword>
<keyword id="KW-0863">Zinc-finger</keyword>
<accession>Q8DS88</accession>